<accession>Q8TWL9</accession>
<dbReference type="EMBL" id="AE009439">
    <property type="protein sequence ID" value="AAM02227.1"/>
    <property type="molecule type" value="Genomic_DNA"/>
</dbReference>
<dbReference type="RefSeq" id="WP_011019382.1">
    <property type="nucleotide sequence ID" value="NC_003551.1"/>
</dbReference>
<dbReference type="SMR" id="Q8TWL9"/>
<dbReference type="FunCoup" id="Q8TWL9">
    <property type="interactions" value="14"/>
</dbReference>
<dbReference type="STRING" id="190192.MK1014"/>
<dbReference type="PaxDb" id="190192-MK1014"/>
<dbReference type="EnsemblBacteria" id="AAM02227">
    <property type="protein sequence ID" value="AAM02227"/>
    <property type="gene ID" value="MK1014"/>
</dbReference>
<dbReference type="GeneID" id="1477115"/>
<dbReference type="KEGG" id="mka:MK1014"/>
<dbReference type="HOGENOM" id="CLU_105846_1_0_2"/>
<dbReference type="InParanoid" id="Q8TWL9"/>
<dbReference type="OrthoDB" id="4691at2157"/>
<dbReference type="Proteomes" id="UP000001826">
    <property type="component" value="Chromosome"/>
</dbReference>
<dbReference type="GO" id="GO:0005886">
    <property type="term" value="C:plasma membrane"/>
    <property type="evidence" value="ECO:0007669"/>
    <property type="project" value="UniProtKB-SubCell"/>
</dbReference>
<dbReference type="GO" id="GO:0033178">
    <property type="term" value="C:proton-transporting two-sector ATPase complex, catalytic domain"/>
    <property type="evidence" value="ECO:0007669"/>
    <property type="project" value="InterPro"/>
</dbReference>
<dbReference type="GO" id="GO:0005524">
    <property type="term" value="F:ATP binding"/>
    <property type="evidence" value="ECO:0007669"/>
    <property type="project" value="UniProtKB-UniRule"/>
</dbReference>
<dbReference type="GO" id="GO:0046933">
    <property type="term" value="F:proton-transporting ATP synthase activity, rotational mechanism"/>
    <property type="evidence" value="ECO:0007669"/>
    <property type="project" value="UniProtKB-UniRule"/>
</dbReference>
<dbReference type="GO" id="GO:0046961">
    <property type="term" value="F:proton-transporting ATPase activity, rotational mechanism"/>
    <property type="evidence" value="ECO:0007669"/>
    <property type="project" value="InterPro"/>
</dbReference>
<dbReference type="GO" id="GO:0042777">
    <property type="term" value="P:proton motive force-driven plasma membrane ATP synthesis"/>
    <property type="evidence" value="ECO:0007669"/>
    <property type="project" value="UniProtKB-UniRule"/>
</dbReference>
<dbReference type="Gene3D" id="3.30.2320.30">
    <property type="entry name" value="ATP synthase, E subunit, C-terminal"/>
    <property type="match status" value="1"/>
</dbReference>
<dbReference type="Gene3D" id="1.20.5.620">
    <property type="entry name" value="F1F0 ATP synthase subunit B, membrane domain"/>
    <property type="match status" value="1"/>
</dbReference>
<dbReference type="HAMAP" id="MF_00311">
    <property type="entry name" value="ATP_synth_E_arch"/>
    <property type="match status" value="1"/>
</dbReference>
<dbReference type="InterPro" id="IPR028987">
    <property type="entry name" value="ATP_synth_B-like_membr_sf"/>
</dbReference>
<dbReference type="InterPro" id="IPR038495">
    <property type="entry name" value="ATPase_E_C"/>
</dbReference>
<dbReference type="InterPro" id="IPR002842">
    <property type="entry name" value="ATPase_V1_Esu"/>
</dbReference>
<dbReference type="NCBIfam" id="NF003049">
    <property type="entry name" value="PRK03963.1"/>
    <property type="match status" value="1"/>
</dbReference>
<dbReference type="PANTHER" id="PTHR45715">
    <property type="entry name" value="ATPASE H+-TRANSPORTING V1 SUBUNIT E1A-RELATED"/>
    <property type="match status" value="1"/>
</dbReference>
<dbReference type="Pfam" id="PF01991">
    <property type="entry name" value="vATP-synt_E"/>
    <property type="match status" value="1"/>
</dbReference>
<dbReference type="SUPFAM" id="SSF81573">
    <property type="entry name" value="F1F0 ATP synthase subunit B, membrane domain"/>
    <property type="match status" value="1"/>
</dbReference>
<dbReference type="SUPFAM" id="SSF160527">
    <property type="entry name" value="V-type ATPase subunit E-like"/>
    <property type="match status" value="1"/>
</dbReference>
<sequence>MGVEELERKILEDAEKEAEEILEEAKRDAERIREKAEREAEEVRREILDRARREAETRRRREIAQAKLEIRQERLRVKEEYIEKAIERAEEKIRELAEEGRKEYLEFLKRSAIEAVNAISSDEVVLRANENDLMLLDEMLSEIRDETGKDVELGEPVEAVGGVIAESKDGSEAYDNTVDARLRRRRSEIVRRVSETLFGG</sequence>
<comment type="function">
    <text evidence="1">Component of the A-type ATP synthase that produces ATP from ADP in the presence of a proton gradient across the membrane.</text>
</comment>
<comment type="subunit">
    <text evidence="1">Has multiple subunits with at least A(3), B(3), C, D, E, F, H, I and proteolipid K(x).</text>
</comment>
<comment type="subcellular location">
    <subcellularLocation>
        <location evidence="1">Cell membrane</location>
        <topology evidence="1">Peripheral membrane protein</topology>
    </subcellularLocation>
</comment>
<comment type="similarity">
    <text evidence="1">Belongs to the V-ATPase E subunit family.</text>
</comment>
<protein>
    <recommendedName>
        <fullName evidence="1">A-type ATP synthase subunit E</fullName>
    </recommendedName>
</protein>
<feature type="chain" id="PRO_0000117317" description="A-type ATP synthase subunit E">
    <location>
        <begin position="1"/>
        <end position="200"/>
    </location>
</feature>
<reference key="1">
    <citation type="journal article" date="2002" name="Proc. Natl. Acad. Sci. U.S.A.">
        <title>The complete genome of hyperthermophile Methanopyrus kandleri AV19 and monophyly of archaeal methanogens.</title>
        <authorList>
            <person name="Slesarev A.I."/>
            <person name="Mezhevaya K.V."/>
            <person name="Makarova K.S."/>
            <person name="Polushin N.N."/>
            <person name="Shcherbinina O.V."/>
            <person name="Shakhova V.V."/>
            <person name="Belova G.I."/>
            <person name="Aravind L."/>
            <person name="Natale D.A."/>
            <person name="Rogozin I.B."/>
            <person name="Tatusov R.L."/>
            <person name="Wolf Y.I."/>
            <person name="Stetter K.O."/>
            <person name="Malykh A.G."/>
            <person name="Koonin E.V."/>
            <person name="Kozyavkin S.A."/>
        </authorList>
    </citation>
    <scope>NUCLEOTIDE SEQUENCE [LARGE SCALE GENOMIC DNA]</scope>
    <source>
        <strain>AV19 / DSM 6324 / JCM 9639 / NBRC 100938</strain>
    </source>
</reference>
<proteinExistence type="inferred from homology"/>
<evidence type="ECO:0000255" key="1">
    <source>
        <dbReference type="HAMAP-Rule" id="MF_00311"/>
    </source>
</evidence>
<gene>
    <name evidence="1" type="primary">atpE</name>
    <name type="ordered locus">MK1014</name>
</gene>
<keyword id="KW-0066">ATP synthesis</keyword>
<keyword id="KW-1003">Cell membrane</keyword>
<keyword id="KW-0375">Hydrogen ion transport</keyword>
<keyword id="KW-0406">Ion transport</keyword>
<keyword id="KW-0472">Membrane</keyword>
<keyword id="KW-1185">Reference proteome</keyword>
<keyword id="KW-0813">Transport</keyword>
<name>AATE_METKA</name>
<organism>
    <name type="scientific">Methanopyrus kandleri (strain AV19 / DSM 6324 / JCM 9639 / NBRC 100938)</name>
    <dbReference type="NCBI Taxonomy" id="190192"/>
    <lineage>
        <taxon>Archaea</taxon>
        <taxon>Methanobacteriati</taxon>
        <taxon>Methanobacteriota</taxon>
        <taxon>Methanomada group</taxon>
        <taxon>Methanopyri</taxon>
        <taxon>Methanopyrales</taxon>
        <taxon>Methanopyraceae</taxon>
        <taxon>Methanopyrus</taxon>
    </lineage>
</organism>